<gene>
    <name type="primary">ALDH4A1</name>
</gene>
<feature type="transit peptide" description="Mitochondrion" evidence="1">
    <location>
        <begin position="1"/>
        <end position="24"/>
    </location>
</feature>
<feature type="chain" id="PRO_0000342182" description="Delta-1-pyrroline-5-carboxylate dehydrogenase, mitochondrial">
    <location>
        <begin position="25"/>
        <end position="563"/>
    </location>
</feature>
<feature type="active site" description="Proton acceptor" evidence="4 5">
    <location>
        <position position="314"/>
    </location>
</feature>
<feature type="active site" description="Nucleophile" evidence="4 5">
    <location>
        <position position="348"/>
    </location>
</feature>
<feature type="binding site" evidence="1">
    <location>
        <position position="208"/>
    </location>
    <ligand>
        <name>NAD(+)</name>
        <dbReference type="ChEBI" id="CHEBI:57540"/>
    </ligand>
</feature>
<feature type="binding site" evidence="1">
    <location>
        <position position="233"/>
    </location>
    <ligand>
        <name>NAD(+)</name>
        <dbReference type="ChEBI" id="CHEBI:57540"/>
    </ligand>
</feature>
<feature type="binding site" evidence="1">
    <location>
        <begin position="286"/>
        <end position="290"/>
    </location>
    <ligand>
        <name>NAD(+)</name>
        <dbReference type="ChEBI" id="CHEBI:57540"/>
    </ligand>
</feature>
<feature type="binding site" evidence="1">
    <location>
        <position position="447"/>
    </location>
    <ligand>
        <name>NAD(+)</name>
        <dbReference type="ChEBI" id="CHEBI:57540"/>
    </ligand>
</feature>
<feature type="binding site" evidence="1">
    <location>
        <position position="513"/>
    </location>
    <ligand>
        <name>substrate</name>
    </ligand>
</feature>
<feature type="site" description="Transition state stabilizer" evidence="1">
    <location>
        <position position="211"/>
    </location>
</feature>
<feature type="modified residue" description="Phosphoserine" evidence="2">
    <location>
        <position position="44"/>
    </location>
</feature>
<feature type="modified residue" description="N6-acetyllysine" evidence="3">
    <location>
        <position position="52"/>
    </location>
</feature>
<feature type="modified residue" description="N6-acetyllysine; alternate" evidence="3">
    <location>
        <position position="93"/>
    </location>
</feature>
<feature type="modified residue" description="N6-succinyllysine; alternate" evidence="3">
    <location>
        <position position="93"/>
    </location>
</feature>
<feature type="modified residue" description="N6-acetyllysine; alternate" evidence="3">
    <location>
        <position position="99"/>
    </location>
</feature>
<feature type="modified residue" description="N6-succinyllysine; alternate" evidence="3">
    <location>
        <position position="99"/>
    </location>
</feature>
<feature type="modified residue" description="N6-acetyllysine; alternate" evidence="3">
    <location>
        <position position="114"/>
    </location>
</feature>
<feature type="modified residue" description="N6-succinyllysine; alternate" evidence="3">
    <location>
        <position position="114"/>
    </location>
</feature>
<feature type="modified residue" description="N6-acetyllysine; alternate" evidence="3">
    <location>
        <position position="130"/>
    </location>
</feature>
<feature type="modified residue" description="N6-succinyllysine; alternate" evidence="3">
    <location>
        <position position="130"/>
    </location>
</feature>
<feature type="modified residue" description="N6-acetyllysine; alternate" evidence="3">
    <location>
        <position position="175"/>
    </location>
</feature>
<feature type="modified residue" description="N6-succinyllysine; alternate" evidence="3">
    <location>
        <position position="175"/>
    </location>
</feature>
<feature type="modified residue" description="N6-acetyllysine" evidence="3">
    <location>
        <position position="318"/>
    </location>
</feature>
<feature type="modified residue" description="N6-succinyllysine" evidence="3">
    <location>
        <position position="347"/>
    </location>
</feature>
<feature type="modified residue" description="N6-acetyllysine" evidence="3">
    <location>
        <position position="365"/>
    </location>
</feature>
<feature type="modified residue" description="N6-acetyllysine" evidence="3">
    <location>
        <position position="376"/>
    </location>
</feature>
<feature type="modified residue" description="N6-succinyllysine" evidence="3">
    <location>
        <position position="395"/>
    </location>
</feature>
<feature type="modified residue" description="N6-acetyllysine; alternate" evidence="3">
    <location>
        <position position="509"/>
    </location>
</feature>
<feature type="modified residue" description="N6-succinyllysine; alternate" evidence="3">
    <location>
        <position position="509"/>
    </location>
</feature>
<feature type="modified residue" description="N6-acetyllysine" evidence="3">
    <location>
        <position position="531"/>
    </location>
</feature>
<sequence length="563" mass="61495">MLLRSAALCRALLARRGRAAGLCRRCVSSLQVANEPVLAFTQGSPERDALQKALKELKGRTEAIPCVVGDEEVWTSDVRYQASPFNHGHKVAKFCYADKALLHRAIGAALAARKEWDLKPVADRAQVFLKAADLLSGPRRAEVLAKTMVGQGKTVIQAEIDAAAELIDFFRFNAKFAMELEGEQPLSVPPSTNSMLYRGLEGFVAAISPFNFTAIGGNLAGAPALMGNVVLWKPSDTAMLASYAVYRILREAGLPPNIIQFVPADGPTFGDTVTSSEHLCGINFTGSVPTFKHLWKQVAQNLDRFRTFPRLAGECGGKNFHFVHRSADVDSVVSGTLRSAFEYGGQKCSACSRLYAPRSLWPQIKGRLLEELGGIKVGNPAEDFGTFFSAVIDAKSFGRIRKWLEHARSSPSLTILAGGHCDDSVGYFVEPCIVETKDPQDPIMKEEIFGPVLAVYVYPDEEYKETLRLVDSTTSYGLTGAVFAQDKDVLREATELLRHAAGNFYINDKSTGSVVGQQPFGGARASGTNDKPGGPHYVLRWTSPQVIKETHGPLGDWRYPYMQ</sequence>
<organism>
    <name type="scientific">Bos taurus</name>
    <name type="common">Bovine</name>
    <dbReference type="NCBI Taxonomy" id="9913"/>
    <lineage>
        <taxon>Eukaryota</taxon>
        <taxon>Metazoa</taxon>
        <taxon>Chordata</taxon>
        <taxon>Craniata</taxon>
        <taxon>Vertebrata</taxon>
        <taxon>Euteleostomi</taxon>
        <taxon>Mammalia</taxon>
        <taxon>Eutheria</taxon>
        <taxon>Laurasiatheria</taxon>
        <taxon>Artiodactyla</taxon>
        <taxon>Ruminantia</taxon>
        <taxon>Pecora</taxon>
        <taxon>Bovidae</taxon>
        <taxon>Bovinae</taxon>
        <taxon>Bos</taxon>
    </lineage>
</organism>
<accession>A7YWE4</accession>
<protein>
    <recommendedName>
        <fullName>Delta-1-pyrroline-5-carboxylate dehydrogenase, mitochondrial</fullName>
        <shortName>P5C dehydrogenase</shortName>
        <ecNumber>1.2.1.88</ecNumber>
    </recommendedName>
    <alternativeName>
        <fullName>Aldehyde dehydrogenase family 4 member A1</fullName>
    </alternativeName>
    <alternativeName>
        <fullName>L-glutamate gamma-semialdehyde dehydrogenase</fullName>
    </alternativeName>
</protein>
<comment type="function">
    <text evidence="1">Irreversible conversion of delta-1-pyrroline-5-carboxylate (P5C), derived either from proline or ornithine, to glutamate. This is a necessary step in the pathway interconnecting the urea and tricarboxylic acid cycles. The preferred substrate is glutamic gamma-semialdehyde, other substrates include succinic, glutaric and adipic semialdehydes (By similarity).</text>
</comment>
<comment type="catalytic activity">
    <reaction>
        <text>L-glutamate 5-semialdehyde + NAD(+) + H2O = L-glutamate + NADH + 2 H(+)</text>
        <dbReference type="Rhea" id="RHEA:30235"/>
        <dbReference type="ChEBI" id="CHEBI:15377"/>
        <dbReference type="ChEBI" id="CHEBI:15378"/>
        <dbReference type="ChEBI" id="CHEBI:29985"/>
        <dbReference type="ChEBI" id="CHEBI:57540"/>
        <dbReference type="ChEBI" id="CHEBI:57945"/>
        <dbReference type="ChEBI" id="CHEBI:58066"/>
        <dbReference type="EC" id="1.2.1.88"/>
    </reaction>
</comment>
<comment type="pathway">
    <text>Amino-acid degradation; L-proline degradation into L-glutamate; L-glutamate from L-proline: step 2/2.</text>
</comment>
<comment type="subunit">
    <text evidence="1">Homodimer.</text>
</comment>
<comment type="subcellular location">
    <subcellularLocation>
        <location evidence="1">Mitochondrion matrix</location>
    </subcellularLocation>
</comment>
<comment type="similarity">
    <text evidence="6">Belongs to the aldehyde dehydrogenase family.</text>
</comment>
<reference key="1">
    <citation type="submission" date="2007-03" db="EMBL/GenBank/DDBJ databases">
        <authorList>
            <consortium name="NIH - Mammalian Gene Collection (MGC) project"/>
        </authorList>
    </citation>
    <scope>NUCLEOTIDE SEQUENCE [LARGE SCALE MRNA]</scope>
    <source>
        <strain>Hereford</strain>
        <tissue>Ascending colon</tissue>
    </source>
</reference>
<dbReference type="EC" id="1.2.1.88"/>
<dbReference type="EMBL" id="BC134524">
    <property type="protein sequence ID" value="AAI34525.1"/>
    <property type="molecule type" value="mRNA"/>
</dbReference>
<dbReference type="RefSeq" id="NP_001099116.1">
    <property type="nucleotide sequence ID" value="NM_001105646.1"/>
</dbReference>
<dbReference type="SMR" id="A7YWE4"/>
<dbReference type="FunCoup" id="A7YWE4">
    <property type="interactions" value="1821"/>
</dbReference>
<dbReference type="STRING" id="9913.ENSBTAP00000059236"/>
<dbReference type="PaxDb" id="9913-ENSBTAP00000020285"/>
<dbReference type="PeptideAtlas" id="A7YWE4"/>
<dbReference type="GeneID" id="100126042"/>
<dbReference type="KEGG" id="bta:100126042"/>
<dbReference type="CTD" id="8659"/>
<dbReference type="VEuPathDB" id="HostDB:ENSBTAG00000030335"/>
<dbReference type="eggNOG" id="KOG2455">
    <property type="taxonomic scope" value="Eukaryota"/>
</dbReference>
<dbReference type="HOGENOM" id="CLU_005391_4_1_1"/>
<dbReference type="InParanoid" id="A7YWE4"/>
<dbReference type="OrthoDB" id="5322683at2759"/>
<dbReference type="TreeFam" id="TF300481"/>
<dbReference type="Reactome" id="R-BTA-389661">
    <property type="pathway name" value="Glyoxylate metabolism and glycine degradation"/>
</dbReference>
<dbReference type="Reactome" id="R-BTA-70688">
    <property type="pathway name" value="Proline catabolism"/>
</dbReference>
<dbReference type="SABIO-RK" id="A7YWE4"/>
<dbReference type="UniPathway" id="UPA00261">
    <property type="reaction ID" value="UER00374"/>
</dbReference>
<dbReference type="Proteomes" id="UP000009136">
    <property type="component" value="Chromosome 2"/>
</dbReference>
<dbReference type="Bgee" id="ENSBTAG00000030335">
    <property type="expression patterns" value="Expressed in cortex of kidney and 106 other cell types or tissues"/>
</dbReference>
<dbReference type="GO" id="GO:0005759">
    <property type="term" value="C:mitochondrial matrix"/>
    <property type="evidence" value="ECO:0007669"/>
    <property type="project" value="UniProtKB-SubCell"/>
</dbReference>
<dbReference type="GO" id="GO:0003842">
    <property type="term" value="F:1-pyrroline-5-carboxylate dehydrogenase activity"/>
    <property type="evidence" value="ECO:0000318"/>
    <property type="project" value="GO_Central"/>
</dbReference>
<dbReference type="GO" id="GO:0010133">
    <property type="term" value="P:proline catabolic process to glutamate"/>
    <property type="evidence" value="ECO:0007669"/>
    <property type="project" value="UniProtKB-UniPathway"/>
</dbReference>
<dbReference type="CDD" id="cd07123">
    <property type="entry name" value="ALDH_F4-17_P5CDH"/>
    <property type="match status" value="1"/>
</dbReference>
<dbReference type="FunFam" id="3.40.605.10:FF:000006">
    <property type="entry name" value="1-pyrroline-5-carboxylate dehydrogenase"/>
    <property type="match status" value="1"/>
</dbReference>
<dbReference type="FunFam" id="3.40.309.10:FF:000005">
    <property type="entry name" value="1-pyrroline-5-carboxylate dehydrogenase 1"/>
    <property type="match status" value="1"/>
</dbReference>
<dbReference type="Gene3D" id="3.40.605.10">
    <property type="entry name" value="Aldehyde Dehydrogenase, Chain A, domain 1"/>
    <property type="match status" value="1"/>
</dbReference>
<dbReference type="Gene3D" id="3.40.309.10">
    <property type="entry name" value="Aldehyde Dehydrogenase, Chain A, domain 2"/>
    <property type="match status" value="1"/>
</dbReference>
<dbReference type="InterPro" id="IPR016161">
    <property type="entry name" value="Ald_DH/histidinol_DH"/>
</dbReference>
<dbReference type="InterPro" id="IPR016163">
    <property type="entry name" value="Ald_DH_C"/>
</dbReference>
<dbReference type="InterPro" id="IPR016160">
    <property type="entry name" value="Ald_DH_CS_CYS"/>
</dbReference>
<dbReference type="InterPro" id="IPR029510">
    <property type="entry name" value="Ald_DH_CS_GLU"/>
</dbReference>
<dbReference type="InterPro" id="IPR016162">
    <property type="entry name" value="Ald_DH_N"/>
</dbReference>
<dbReference type="InterPro" id="IPR015590">
    <property type="entry name" value="Aldehyde_DH_dom"/>
</dbReference>
<dbReference type="InterPro" id="IPR005931">
    <property type="entry name" value="P5CDH/ALDH4A1"/>
</dbReference>
<dbReference type="NCBIfam" id="TIGR01236">
    <property type="entry name" value="D1pyr5carbox1"/>
    <property type="match status" value="1"/>
</dbReference>
<dbReference type="PANTHER" id="PTHR14516">
    <property type="entry name" value="1-PYRROLINE-5-CARBOXYLATE DEHYDROGENASE FAMILY MEMBER"/>
    <property type="match status" value="1"/>
</dbReference>
<dbReference type="PANTHER" id="PTHR14516:SF3">
    <property type="entry name" value="DELTA-1-PYRROLINE-5-CARBOXYLATE DEHYDROGENASE, MITOCHONDRIAL"/>
    <property type="match status" value="1"/>
</dbReference>
<dbReference type="Pfam" id="PF00171">
    <property type="entry name" value="Aldedh"/>
    <property type="match status" value="1"/>
</dbReference>
<dbReference type="SUPFAM" id="SSF53720">
    <property type="entry name" value="ALDH-like"/>
    <property type="match status" value="1"/>
</dbReference>
<dbReference type="PROSITE" id="PS00070">
    <property type="entry name" value="ALDEHYDE_DEHYDR_CYS"/>
    <property type="match status" value="1"/>
</dbReference>
<dbReference type="PROSITE" id="PS00687">
    <property type="entry name" value="ALDEHYDE_DEHYDR_GLU"/>
    <property type="match status" value="1"/>
</dbReference>
<evidence type="ECO:0000250" key="1"/>
<evidence type="ECO:0000250" key="2">
    <source>
        <dbReference type="UniProtKB" id="P30038"/>
    </source>
</evidence>
<evidence type="ECO:0000250" key="3">
    <source>
        <dbReference type="UniProtKB" id="Q8CHT0"/>
    </source>
</evidence>
<evidence type="ECO:0000255" key="4">
    <source>
        <dbReference type="PROSITE-ProRule" id="PRU10007"/>
    </source>
</evidence>
<evidence type="ECO:0000255" key="5">
    <source>
        <dbReference type="PROSITE-ProRule" id="PRU10008"/>
    </source>
</evidence>
<evidence type="ECO:0000305" key="6"/>
<keyword id="KW-0007">Acetylation</keyword>
<keyword id="KW-0496">Mitochondrion</keyword>
<keyword id="KW-0520">NAD</keyword>
<keyword id="KW-0560">Oxidoreductase</keyword>
<keyword id="KW-0597">Phosphoprotein</keyword>
<keyword id="KW-0642">Proline metabolism</keyword>
<keyword id="KW-1185">Reference proteome</keyword>
<keyword id="KW-0809">Transit peptide</keyword>
<name>AL4A1_BOVIN</name>
<proteinExistence type="evidence at transcript level"/>